<keyword id="KW-1003">Cell membrane</keyword>
<keyword id="KW-0145">Chemotaxis</keyword>
<keyword id="KW-0968">Cytoplasmic vesicle</keyword>
<keyword id="KW-1015">Disulfide bond</keyword>
<keyword id="KW-0297">G-protein coupled receptor</keyword>
<keyword id="KW-0472">Membrane</keyword>
<keyword id="KW-0597">Phosphoprotein</keyword>
<keyword id="KW-0675">Receptor</keyword>
<keyword id="KW-1185">Reference proteome</keyword>
<keyword id="KW-0765">Sulfation</keyword>
<keyword id="KW-0807">Transducer</keyword>
<keyword id="KW-0812">Transmembrane</keyword>
<keyword id="KW-1133">Transmembrane helix</keyword>
<accession>P30992</accession>
<protein>
    <recommendedName>
        <fullName>C5a anaphylatoxin chemotactic receptor 1</fullName>
    </recommendedName>
    <alternativeName>
        <fullName>C5a anaphylatoxin chemotactic receptor</fullName>
        <shortName>C5a-R</shortName>
        <shortName>C5aR</shortName>
    </alternativeName>
    <cdAntigenName>CD88</cdAntigenName>
</protein>
<sequence length="352" mass="39213">MASMNFSPPEYPDYGTATLDPNIFVDESLNTPKLSVPDMIALVIFVMVFLVGVPGNFLVVWVTGFEVRRTINAIWFLNLAVADLLSCLALPILFSSIVQQGYWPFGNAACRILPSLILLNMYASILLLTTISADRFVLVFNPIWCQNYRGPQLAWAACSVAWAVALLLTVPSFIFRGVHTEYFPFWMTCGVDYSGVGVLVERGVAILRLLMGFLGPLVILSICYTFLLIRTWSRKATRSTKTLKVVVAVVVSFFVLWLPYQVTGMMMALFYKHSESFRRVSRLDSLCVAVAYINCCINPIIYVLAAQGFHSRFLKSLPARLRQVLAEESVGRDSKSITLSTVDTPAQKSQGV</sequence>
<comment type="function">
    <text evidence="1 3">Receptor for the chemotactic and inflammatory peptide anaphylatoxin C5a (PubMed:1472004). The ligand interacts with at least two sites on the receptor: a high-affinity site on the extracellular N-terminus, and a second site in the transmembrane region which activates downstream signaling events. Receptor activation stimulates chemotaxis, granule enzyme release, intracellular calcium release and superoxide anion production (By similarity).</text>
</comment>
<comment type="subunit">
    <text evidence="1">Homodimer. May also form higher-order oligomers. Interacts (when phosphorylated) with ARRB1 and ARRB2; the interaction is associated with internalization of C5aR.</text>
</comment>
<comment type="subcellular location">
    <subcellularLocation>
        <location evidence="3">Cell membrane</location>
        <topology evidence="1">Multi-pass membrane protein</topology>
    </subcellularLocation>
    <subcellularLocation>
        <location evidence="1">Cytoplasmic vesicle</location>
    </subcellularLocation>
    <text evidence="1">Phosphorylated C5aR colocalizes with ARRB1 and ARRB2 in cytoplasmic vesicles.</text>
</comment>
<comment type="PTM">
    <text evidence="1">Sulfation plays a critical role in the association of C5aR with C5a, but no significant role in the ability of the receptor to transduce a signal and mobilize calcium in response to a small peptide agonist.</text>
</comment>
<comment type="PTM">
    <text evidence="1">Phosphorylated on serine residues in response to C5a binding, resulting in internalization of the receptor and short-term desensitization to C5a.</text>
</comment>
<comment type="similarity">
    <text evidence="2">Belongs to the G-protein coupled receptor 1 family.</text>
</comment>
<feature type="chain" id="PRO_0000069206" description="C5a anaphylatoxin chemotactic receptor 1">
    <location>
        <begin position="1"/>
        <end position="352"/>
    </location>
</feature>
<feature type="topological domain" description="Extracellular" evidence="4">
    <location>
        <begin position="1"/>
        <end position="38"/>
    </location>
</feature>
<feature type="transmembrane region" description="Helical; Name=1" evidence="1">
    <location>
        <begin position="39"/>
        <end position="65"/>
    </location>
</feature>
<feature type="topological domain" description="Cytoplasmic" evidence="4">
    <location>
        <begin position="66"/>
        <end position="70"/>
    </location>
</feature>
<feature type="transmembrane region" description="Helical; Name=2" evidence="1">
    <location>
        <begin position="71"/>
        <end position="94"/>
    </location>
</feature>
<feature type="topological domain" description="Extracellular" evidence="4">
    <location>
        <begin position="95"/>
        <end position="111"/>
    </location>
</feature>
<feature type="transmembrane region" description="Helical; Name=3" evidence="1">
    <location>
        <begin position="112"/>
        <end position="133"/>
    </location>
</feature>
<feature type="topological domain" description="Cytoplasmic" evidence="4">
    <location>
        <begin position="134"/>
        <end position="154"/>
    </location>
</feature>
<feature type="transmembrane region" description="Helical; Name=4" evidence="1">
    <location>
        <begin position="155"/>
        <end position="175"/>
    </location>
</feature>
<feature type="topological domain" description="Extracellular" evidence="4">
    <location>
        <begin position="176"/>
        <end position="202"/>
    </location>
</feature>
<feature type="transmembrane region" description="Helical; Name=5" evidence="1">
    <location>
        <begin position="203"/>
        <end position="228"/>
    </location>
</feature>
<feature type="topological domain" description="Cytoplasmic" evidence="4">
    <location>
        <begin position="229"/>
        <end position="244"/>
    </location>
</feature>
<feature type="transmembrane region" description="Helical; Name=6" evidence="1">
    <location>
        <begin position="245"/>
        <end position="267"/>
    </location>
</feature>
<feature type="topological domain" description="Extracellular" evidence="4">
    <location>
        <begin position="268"/>
        <end position="284"/>
    </location>
</feature>
<feature type="transmembrane region" description="Helical; Name=7" evidence="1">
    <location>
        <begin position="285"/>
        <end position="305"/>
    </location>
</feature>
<feature type="topological domain" description="Cytoplasmic" evidence="4">
    <location>
        <begin position="306"/>
        <end position="352"/>
    </location>
</feature>
<feature type="modified residue" description="Sulfotyrosine" evidence="1">
    <location>
        <position position="11"/>
    </location>
</feature>
<feature type="modified residue" description="Sulfotyrosine" evidence="1">
    <location>
        <position position="14"/>
    </location>
</feature>
<feature type="modified residue" description="Phosphoserine" evidence="1">
    <location>
        <position position="316"/>
    </location>
</feature>
<feature type="modified residue" description="Phosphoserine" evidence="1">
    <location>
        <position position="329"/>
    </location>
</feature>
<feature type="modified residue" description="Phosphoserine" evidence="1">
    <location>
        <position position="334"/>
    </location>
</feature>
<feature type="modified residue" description="Phosphoserine" evidence="1">
    <location>
        <position position="336"/>
    </location>
</feature>
<feature type="modified residue" description="Phosphoserine" evidence="1">
    <location>
        <position position="340"/>
    </location>
</feature>
<feature type="disulfide bond" evidence="2">
    <location>
        <begin position="110"/>
        <end position="189"/>
    </location>
</feature>
<gene>
    <name type="primary">C5AR1</name>
    <name type="synonym">C5R1</name>
</gene>
<proteinExistence type="evidence at transcript level"/>
<organism>
    <name type="scientific">Canis lupus familiaris</name>
    <name type="common">Dog</name>
    <name type="synonym">Canis familiaris</name>
    <dbReference type="NCBI Taxonomy" id="9615"/>
    <lineage>
        <taxon>Eukaryota</taxon>
        <taxon>Metazoa</taxon>
        <taxon>Chordata</taxon>
        <taxon>Craniata</taxon>
        <taxon>Vertebrata</taxon>
        <taxon>Euteleostomi</taxon>
        <taxon>Mammalia</taxon>
        <taxon>Eutheria</taxon>
        <taxon>Laurasiatheria</taxon>
        <taxon>Carnivora</taxon>
        <taxon>Caniformia</taxon>
        <taxon>Canidae</taxon>
        <taxon>Canis</taxon>
    </lineage>
</organism>
<evidence type="ECO:0000250" key="1">
    <source>
        <dbReference type="UniProtKB" id="P21730"/>
    </source>
</evidence>
<evidence type="ECO:0000255" key="2">
    <source>
        <dbReference type="PROSITE-ProRule" id="PRU00521"/>
    </source>
</evidence>
<evidence type="ECO:0000269" key="3">
    <source>
    </source>
</evidence>
<evidence type="ECO:0000305" key="4"/>
<dbReference type="EMBL" id="X65860">
    <property type="protein sequence ID" value="CAA46690.1"/>
    <property type="molecule type" value="mRNA"/>
</dbReference>
<dbReference type="PIR" id="S27357">
    <property type="entry name" value="S27357"/>
</dbReference>
<dbReference type="RefSeq" id="NP_001003373.1">
    <property type="nucleotide sequence ID" value="NM_001003373.1"/>
</dbReference>
<dbReference type="SMR" id="P30992"/>
<dbReference type="FunCoup" id="P30992">
    <property type="interactions" value="237"/>
</dbReference>
<dbReference type="STRING" id="9615.ENSCAFP00000006201"/>
<dbReference type="ChEMBL" id="CHEMBL5745"/>
<dbReference type="PaxDb" id="9612-ENSCAFP00000039091"/>
<dbReference type="GeneID" id="442974"/>
<dbReference type="KEGG" id="cfa:442974"/>
<dbReference type="CTD" id="728"/>
<dbReference type="eggNOG" id="ENOG502R35Z">
    <property type="taxonomic scope" value="Eukaryota"/>
</dbReference>
<dbReference type="InParanoid" id="P30992"/>
<dbReference type="OrthoDB" id="9835842at2759"/>
<dbReference type="PRO" id="PR:P30992"/>
<dbReference type="Proteomes" id="UP000002254">
    <property type="component" value="Unplaced"/>
</dbReference>
<dbReference type="Proteomes" id="UP000694429">
    <property type="component" value="Unplaced"/>
</dbReference>
<dbReference type="Proteomes" id="UP000694542">
    <property type="component" value="Unplaced"/>
</dbReference>
<dbReference type="Proteomes" id="UP000805418">
    <property type="component" value="Unplaced"/>
</dbReference>
<dbReference type="GO" id="GO:0045177">
    <property type="term" value="C:apical part of cell"/>
    <property type="evidence" value="ECO:0000250"/>
    <property type="project" value="UniProtKB"/>
</dbReference>
<dbReference type="GO" id="GO:0016323">
    <property type="term" value="C:basolateral plasma membrane"/>
    <property type="evidence" value="ECO:0000250"/>
    <property type="project" value="UniProtKB"/>
</dbReference>
<dbReference type="GO" id="GO:0031410">
    <property type="term" value="C:cytoplasmic vesicle"/>
    <property type="evidence" value="ECO:0007669"/>
    <property type="project" value="UniProtKB-KW"/>
</dbReference>
<dbReference type="GO" id="GO:0005886">
    <property type="term" value="C:plasma membrane"/>
    <property type="evidence" value="ECO:0000318"/>
    <property type="project" value="GO_Central"/>
</dbReference>
<dbReference type="GO" id="GO:0004878">
    <property type="term" value="F:complement component C5a receptor activity"/>
    <property type="evidence" value="ECO:0000250"/>
    <property type="project" value="UniProtKB"/>
</dbReference>
<dbReference type="GO" id="GO:0004930">
    <property type="term" value="F:G protein-coupled receptor activity"/>
    <property type="evidence" value="ECO:0000318"/>
    <property type="project" value="GO_Central"/>
</dbReference>
<dbReference type="GO" id="GO:0006935">
    <property type="term" value="P:chemotaxis"/>
    <property type="evidence" value="ECO:0007669"/>
    <property type="project" value="UniProtKB-KW"/>
</dbReference>
<dbReference type="GO" id="GO:0002430">
    <property type="term" value="P:complement receptor mediated signaling pathway"/>
    <property type="evidence" value="ECO:0000318"/>
    <property type="project" value="GO_Central"/>
</dbReference>
<dbReference type="GO" id="GO:0006954">
    <property type="term" value="P:inflammatory response"/>
    <property type="evidence" value="ECO:0000318"/>
    <property type="project" value="GO_Central"/>
</dbReference>
<dbReference type="GO" id="GO:0042789">
    <property type="term" value="P:mRNA transcription by RNA polymerase II"/>
    <property type="evidence" value="ECO:0000250"/>
    <property type="project" value="UniProtKB"/>
</dbReference>
<dbReference type="GO" id="GO:0007200">
    <property type="term" value="P:phospholipase C-activating G protein-coupled receptor signaling pathway"/>
    <property type="evidence" value="ECO:0000318"/>
    <property type="project" value="GO_Central"/>
</dbReference>
<dbReference type="GO" id="GO:0007204">
    <property type="term" value="P:positive regulation of cytosolic calcium ion concentration"/>
    <property type="evidence" value="ECO:0000318"/>
    <property type="project" value="GO_Central"/>
</dbReference>
<dbReference type="GO" id="GO:0050679">
    <property type="term" value="P:positive regulation of epithelial cell proliferation"/>
    <property type="evidence" value="ECO:0000250"/>
    <property type="project" value="UniProtKB"/>
</dbReference>
<dbReference type="GO" id="GO:0070374">
    <property type="term" value="P:positive regulation of ERK1 and ERK2 cascade"/>
    <property type="evidence" value="ECO:0000250"/>
    <property type="project" value="UniProtKB"/>
</dbReference>
<dbReference type="FunFam" id="1.20.1070.10:FF:000034">
    <property type="entry name" value="G-protein coupled receptor 1"/>
    <property type="match status" value="1"/>
</dbReference>
<dbReference type="Gene3D" id="1.20.1070.10">
    <property type="entry name" value="Rhodopsin 7-helix transmembrane proteins"/>
    <property type="match status" value="1"/>
</dbReference>
<dbReference type="InterPro" id="IPR002234">
    <property type="entry name" value="Anphylx_rcpt_C3a/C5a1-2"/>
</dbReference>
<dbReference type="InterPro" id="IPR000826">
    <property type="entry name" value="Formyl_rcpt-rel"/>
</dbReference>
<dbReference type="InterPro" id="IPR000276">
    <property type="entry name" value="GPCR_Rhodpsn"/>
</dbReference>
<dbReference type="InterPro" id="IPR017452">
    <property type="entry name" value="GPCR_Rhodpsn_7TM"/>
</dbReference>
<dbReference type="PANTHER" id="PTHR24225:SF29">
    <property type="entry name" value="C5A ANAPHYLATOXIN CHEMOTACTIC RECEPTOR 1"/>
    <property type="match status" value="1"/>
</dbReference>
<dbReference type="PANTHER" id="PTHR24225">
    <property type="entry name" value="CHEMOTACTIC RECEPTOR"/>
    <property type="match status" value="1"/>
</dbReference>
<dbReference type="Pfam" id="PF00001">
    <property type="entry name" value="7tm_1"/>
    <property type="match status" value="1"/>
</dbReference>
<dbReference type="PRINTS" id="PR01104">
    <property type="entry name" value="ANPHYLATOXNR"/>
</dbReference>
<dbReference type="PRINTS" id="PR00426">
    <property type="entry name" value="C5ANPHYLTXNR"/>
</dbReference>
<dbReference type="PRINTS" id="PR00237">
    <property type="entry name" value="GPCRRHODOPSN"/>
</dbReference>
<dbReference type="SUPFAM" id="SSF81321">
    <property type="entry name" value="Family A G protein-coupled receptor-like"/>
    <property type="match status" value="1"/>
</dbReference>
<dbReference type="PROSITE" id="PS00237">
    <property type="entry name" value="G_PROTEIN_RECEP_F1_1"/>
    <property type="match status" value="1"/>
</dbReference>
<dbReference type="PROSITE" id="PS50262">
    <property type="entry name" value="G_PROTEIN_RECEP_F1_2"/>
    <property type="match status" value="1"/>
</dbReference>
<reference key="1">
    <citation type="journal article" date="1992" name="Biochem. J.">
        <title>Cloning and functional expression of the canine anaphylatoxin C5a receptor. Evidence for high interspecies variability.</title>
        <authorList>
            <person name="Perret J.J."/>
            <person name="Raspe E."/>
            <person name="Vassart G."/>
            <person name="Parmentier M."/>
        </authorList>
    </citation>
    <scope>NUCLEOTIDE SEQUENCE [MRNA]</scope>
    <scope>FUNCTION</scope>
    <scope>SUBCELLULAR LOCATION</scope>
</reference>
<name>C5AR1_CANLF</name>